<reference key="1">
    <citation type="journal article" date="2005" name="J. Bacteriol.">
        <title>The genome of Sulfolobus acidocaldarius, a model organism of the Crenarchaeota.</title>
        <authorList>
            <person name="Chen L."/>
            <person name="Bruegger K."/>
            <person name="Skovgaard M."/>
            <person name="Redder P."/>
            <person name="She Q."/>
            <person name="Torarinsson E."/>
            <person name="Greve B."/>
            <person name="Awayez M."/>
            <person name="Zibat A."/>
            <person name="Klenk H.-P."/>
            <person name="Garrett R.A."/>
        </authorList>
    </citation>
    <scope>NUCLEOTIDE SEQUENCE [LARGE SCALE GENOMIC DNA]</scope>
    <source>
        <strain>ATCC 33909 / DSM 639 / JCM 8929 / NBRC 15157 / NCIMB 11770</strain>
    </source>
</reference>
<comment type="subunit">
    <text evidence="1">Part of the 30S ribosomal subunit.</text>
</comment>
<comment type="similarity">
    <text evidence="1">Belongs to the universal ribosomal protein uS15 family.</text>
</comment>
<accession>Q4JAI3</accession>
<sequence>MNKKRAKGNSHSIRPVRSGPPKWVRFTREEVELLVEELAKRGYPPSMIGMVLRDQYGVPLVKQITGRKLTAILQDRNMKPKIPEDLFNLMRRAVNIRRHLFEYPKDKSAKRGLEEVESKIRRLASYYKETGKLPQEWSYDPAKAELLVTGSLY</sequence>
<protein>
    <recommendedName>
        <fullName evidence="1">Small ribosomal subunit protein uS15</fullName>
    </recommendedName>
    <alternativeName>
        <fullName evidence="2">30S ribosomal protein S15</fullName>
    </alternativeName>
</protein>
<name>RS15_SULAC</name>
<proteinExistence type="evidence at protein level"/>
<organism>
    <name type="scientific">Sulfolobus acidocaldarius (strain ATCC 33909 / DSM 639 / JCM 8929 / NBRC 15157 / NCIMB 11770)</name>
    <dbReference type="NCBI Taxonomy" id="330779"/>
    <lineage>
        <taxon>Archaea</taxon>
        <taxon>Thermoproteota</taxon>
        <taxon>Thermoprotei</taxon>
        <taxon>Sulfolobales</taxon>
        <taxon>Sulfolobaceae</taxon>
        <taxon>Sulfolobus</taxon>
    </lineage>
</organism>
<evidence type="ECO:0000255" key="1">
    <source>
        <dbReference type="HAMAP-Rule" id="MF_01343"/>
    </source>
</evidence>
<evidence type="ECO:0000305" key="2"/>
<feature type="chain" id="PRO_0000115620" description="Small ribosomal subunit protein uS15">
    <location>
        <begin position="1"/>
        <end position="153"/>
    </location>
</feature>
<dbReference type="EMBL" id="CP000077">
    <property type="protein sequence ID" value="AAY80196.1"/>
    <property type="molecule type" value="Genomic_DNA"/>
</dbReference>
<dbReference type="RefSeq" id="WP_011277698.1">
    <property type="nucleotide sequence ID" value="NC_007181.1"/>
</dbReference>
<dbReference type="PDB" id="8HKX">
    <property type="method" value="EM"/>
    <property type="resolution" value="3.14 A"/>
    <property type="chains" value="S15P=1-149"/>
</dbReference>
<dbReference type="PDB" id="8HKY">
    <property type="method" value="EM"/>
    <property type="resolution" value="4.45 A"/>
    <property type="chains" value="S15P=1-149"/>
</dbReference>
<dbReference type="PDB" id="8HKZ">
    <property type="method" value="EM"/>
    <property type="resolution" value="4.78 A"/>
    <property type="chains" value="S15P=1-149"/>
</dbReference>
<dbReference type="PDB" id="8HL1">
    <property type="method" value="EM"/>
    <property type="resolution" value="3.93 A"/>
    <property type="chains" value="S15P=1-149"/>
</dbReference>
<dbReference type="PDB" id="8HL2">
    <property type="method" value="EM"/>
    <property type="resolution" value="4.10 A"/>
    <property type="chains" value="S15P=1-149"/>
</dbReference>
<dbReference type="PDB" id="8HL3">
    <property type="method" value="EM"/>
    <property type="resolution" value="4.80 A"/>
    <property type="chains" value="S15P=1-149"/>
</dbReference>
<dbReference type="PDB" id="8HL4">
    <property type="method" value="EM"/>
    <property type="resolution" value="4.62 A"/>
    <property type="chains" value="S15P=1-149"/>
</dbReference>
<dbReference type="PDB" id="8HL5">
    <property type="method" value="EM"/>
    <property type="resolution" value="5.72 A"/>
    <property type="chains" value="S15P=1-149"/>
</dbReference>
<dbReference type="PDB" id="8WKP">
    <property type="method" value="EM"/>
    <property type="resolution" value="4.62 A"/>
    <property type="chains" value="S15P=1-149"/>
</dbReference>
<dbReference type="PDB" id="8WQ2">
    <property type="method" value="EM"/>
    <property type="resolution" value="4.10 A"/>
    <property type="chains" value="S15P=1-149"/>
</dbReference>
<dbReference type="PDB" id="8WQ4">
    <property type="method" value="EM"/>
    <property type="resolution" value="4.53 A"/>
    <property type="chains" value="S15P=1-149"/>
</dbReference>
<dbReference type="PDBsum" id="8HKX"/>
<dbReference type="PDBsum" id="8HKY"/>
<dbReference type="PDBsum" id="8HKZ"/>
<dbReference type="PDBsum" id="8HL1"/>
<dbReference type="PDBsum" id="8HL2"/>
<dbReference type="PDBsum" id="8HL3"/>
<dbReference type="PDBsum" id="8HL4"/>
<dbReference type="PDBsum" id="8HL5"/>
<dbReference type="PDBsum" id="8WKP"/>
<dbReference type="PDBsum" id="8WQ2"/>
<dbReference type="PDBsum" id="8WQ4"/>
<dbReference type="EMDB" id="EMD-34862"/>
<dbReference type="EMDB" id="EMD-34863"/>
<dbReference type="EMDB" id="EMD-34864"/>
<dbReference type="EMDB" id="EMD-34866"/>
<dbReference type="EMDB" id="EMD-34867"/>
<dbReference type="EMDB" id="EMD-34868"/>
<dbReference type="EMDB" id="EMD-34869"/>
<dbReference type="EMDB" id="EMD-34870"/>
<dbReference type="EMDB" id="EMD-37604"/>
<dbReference type="EMDB" id="EMD-37733"/>
<dbReference type="EMDB" id="EMD-37734"/>
<dbReference type="SMR" id="Q4JAI3"/>
<dbReference type="STRING" id="330779.Saci_0829"/>
<dbReference type="GeneID" id="14551342"/>
<dbReference type="KEGG" id="sai:Saci_0829"/>
<dbReference type="PATRIC" id="fig|330779.12.peg.793"/>
<dbReference type="eggNOG" id="arCOG04185">
    <property type="taxonomic scope" value="Archaea"/>
</dbReference>
<dbReference type="HOGENOM" id="CLU_090139_2_0_2"/>
<dbReference type="Proteomes" id="UP000001018">
    <property type="component" value="Chromosome"/>
</dbReference>
<dbReference type="GO" id="GO:0022627">
    <property type="term" value="C:cytosolic small ribosomal subunit"/>
    <property type="evidence" value="ECO:0007669"/>
    <property type="project" value="TreeGrafter"/>
</dbReference>
<dbReference type="GO" id="GO:0070181">
    <property type="term" value="F:small ribosomal subunit rRNA binding"/>
    <property type="evidence" value="ECO:0007669"/>
    <property type="project" value="TreeGrafter"/>
</dbReference>
<dbReference type="GO" id="GO:0003735">
    <property type="term" value="F:structural constituent of ribosome"/>
    <property type="evidence" value="ECO:0007669"/>
    <property type="project" value="InterPro"/>
</dbReference>
<dbReference type="GO" id="GO:0006412">
    <property type="term" value="P:translation"/>
    <property type="evidence" value="ECO:0007669"/>
    <property type="project" value="UniProtKB-UniRule"/>
</dbReference>
<dbReference type="CDD" id="cd00353">
    <property type="entry name" value="Ribosomal_S15p_S13e"/>
    <property type="match status" value="1"/>
</dbReference>
<dbReference type="FunFam" id="1.10.287.10:FF:000003">
    <property type="entry name" value="40S ribosomal protein S13"/>
    <property type="match status" value="1"/>
</dbReference>
<dbReference type="Gene3D" id="4.10.860.130">
    <property type="match status" value="1"/>
</dbReference>
<dbReference type="Gene3D" id="1.10.287.10">
    <property type="entry name" value="S15/NS1, RNA-binding"/>
    <property type="match status" value="1"/>
</dbReference>
<dbReference type="HAMAP" id="MF_01343_A">
    <property type="entry name" value="Ribosomal_uS15_A"/>
    <property type="match status" value="1"/>
</dbReference>
<dbReference type="InterPro" id="IPR000589">
    <property type="entry name" value="Ribosomal_uS15"/>
</dbReference>
<dbReference type="InterPro" id="IPR023029">
    <property type="entry name" value="Ribosomal_uS15_arc_euk"/>
</dbReference>
<dbReference type="InterPro" id="IPR012606">
    <property type="entry name" value="Ribosomal_uS15_N"/>
</dbReference>
<dbReference type="InterPro" id="IPR009068">
    <property type="entry name" value="uS15_NS1_RNA-bd_sf"/>
</dbReference>
<dbReference type="NCBIfam" id="NF006331">
    <property type="entry name" value="PRK08561.1"/>
    <property type="match status" value="1"/>
</dbReference>
<dbReference type="PANTHER" id="PTHR11885">
    <property type="entry name" value="RIBOSOMAL PROTEIN S15P/S13E"/>
    <property type="match status" value="1"/>
</dbReference>
<dbReference type="PANTHER" id="PTHR11885:SF6">
    <property type="entry name" value="SMALL RIBOSOMAL SUBUNIT PROTEIN US15"/>
    <property type="match status" value="1"/>
</dbReference>
<dbReference type="Pfam" id="PF08069">
    <property type="entry name" value="Ribosomal_S13_N"/>
    <property type="match status" value="1"/>
</dbReference>
<dbReference type="Pfam" id="PF00312">
    <property type="entry name" value="Ribosomal_S15"/>
    <property type="match status" value="1"/>
</dbReference>
<dbReference type="SMART" id="SM01386">
    <property type="entry name" value="Ribosomal_S13_N"/>
    <property type="match status" value="1"/>
</dbReference>
<dbReference type="SMART" id="SM01387">
    <property type="entry name" value="Ribosomal_S15"/>
    <property type="match status" value="1"/>
</dbReference>
<dbReference type="SUPFAM" id="SSF47060">
    <property type="entry name" value="S15/NS1 RNA-binding domain"/>
    <property type="match status" value="1"/>
</dbReference>
<dbReference type="PROSITE" id="PS00362">
    <property type="entry name" value="RIBOSOMAL_S15"/>
    <property type="match status" value="1"/>
</dbReference>
<gene>
    <name evidence="1" type="primary">rps15</name>
    <name type="ordered locus">Saci_0829</name>
</gene>
<keyword id="KW-0002">3D-structure</keyword>
<keyword id="KW-1185">Reference proteome</keyword>
<keyword id="KW-0687">Ribonucleoprotein</keyword>
<keyword id="KW-0689">Ribosomal protein</keyword>